<sequence length="129" mass="13463">MADFQVVVGDDDGTAYSFEVDGQDANRFIGRAIGETVDGDAVGLPGYELEITGGSDQSGRPMHGDINGAETAAILSEGGVGFNPTVDGERKRVTVRGAEVSEDTRQINASIVSRGEQSIDDLLGGEDDE</sequence>
<keyword id="KW-1185">Reference proteome</keyword>
<keyword id="KW-0687">Ribonucleoprotein</keyword>
<keyword id="KW-0689">Ribosomal protein</keyword>
<accession>Q3ISW0</accession>
<proteinExistence type="inferred from homology"/>
<feature type="chain" id="PRO_0000258626" description="Small ribosomal subunit protein eS6">
    <location>
        <begin position="1"/>
        <end position="129"/>
    </location>
</feature>
<feature type="region of interest" description="Disordered" evidence="2">
    <location>
        <begin position="106"/>
        <end position="129"/>
    </location>
</feature>
<comment type="similarity">
    <text evidence="1">Belongs to the eukaryotic ribosomal protein eS6 family.</text>
</comment>
<organism>
    <name type="scientific">Natronomonas pharaonis (strain ATCC 35678 / DSM 2160 / CIP 103997 / JCM 8858 / NBRC 14720 / NCIMB 2260 / Gabara)</name>
    <name type="common">Halobacterium pharaonis</name>
    <dbReference type="NCBI Taxonomy" id="348780"/>
    <lineage>
        <taxon>Archaea</taxon>
        <taxon>Methanobacteriati</taxon>
        <taxon>Methanobacteriota</taxon>
        <taxon>Stenosarchaea group</taxon>
        <taxon>Halobacteria</taxon>
        <taxon>Halobacteriales</taxon>
        <taxon>Haloarculaceae</taxon>
        <taxon>Natronomonas</taxon>
    </lineage>
</organism>
<dbReference type="EMBL" id="CR936257">
    <property type="protein sequence ID" value="CAI48775.1"/>
    <property type="molecule type" value="Genomic_DNA"/>
</dbReference>
<dbReference type="RefSeq" id="WP_011322410.1">
    <property type="nucleotide sequence ID" value="NC_007426.1"/>
</dbReference>
<dbReference type="SMR" id="Q3ISW0"/>
<dbReference type="STRING" id="348780.NP_1368A"/>
<dbReference type="EnsemblBacteria" id="CAI48775">
    <property type="protein sequence ID" value="CAI48775"/>
    <property type="gene ID" value="NP_1368A"/>
</dbReference>
<dbReference type="GeneID" id="3703185"/>
<dbReference type="KEGG" id="nph:NP_1368A"/>
<dbReference type="eggNOG" id="arCOG01946">
    <property type="taxonomic scope" value="Archaea"/>
</dbReference>
<dbReference type="HOGENOM" id="CLU_109671_1_1_2"/>
<dbReference type="OrthoDB" id="7793at2157"/>
<dbReference type="Proteomes" id="UP000002698">
    <property type="component" value="Chromosome"/>
</dbReference>
<dbReference type="GO" id="GO:1990904">
    <property type="term" value="C:ribonucleoprotein complex"/>
    <property type="evidence" value="ECO:0007669"/>
    <property type="project" value="UniProtKB-KW"/>
</dbReference>
<dbReference type="GO" id="GO:0005840">
    <property type="term" value="C:ribosome"/>
    <property type="evidence" value="ECO:0007669"/>
    <property type="project" value="UniProtKB-KW"/>
</dbReference>
<dbReference type="GO" id="GO:0003735">
    <property type="term" value="F:structural constituent of ribosome"/>
    <property type="evidence" value="ECO:0007669"/>
    <property type="project" value="InterPro"/>
</dbReference>
<dbReference type="GO" id="GO:0006412">
    <property type="term" value="P:translation"/>
    <property type="evidence" value="ECO:0007669"/>
    <property type="project" value="UniProtKB-UniRule"/>
</dbReference>
<dbReference type="HAMAP" id="MF_00512">
    <property type="entry name" value="Ribosomal_eS6"/>
    <property type="match status" value="1"/>
</dbReference>
<dbReference type="InterPro" id="IPR001377">
    <property type="entry name" value="Ribosomal_eS6"/>
</dbReference>
<dbReference type="InterPro" id="IPR020924">
    <property type="entry name" value="Ribosomal_eS6_arc"/>
</dbReference>
<dbReference type="InterPro" id="IPR018282">
    <property type="entry name" value="Ribosomal_eS6_CS"/>
</dbReference>
<dbReference type="NCBIfam" id="NF003294">
    <property type="entry name" value="PRK04290.1-3"/>
    <property type="match status" value="1"/>
</dbReference>
<dbReference type="PANTHER" id="PTHR11502">
    <property type="entry name" value="40S RIBOSOMAL PROTEIN S6"/>
    <property type="match status" value="1"/>
</dbReference>
<dbReference type="Pfam" id="PF01092">
    <property type="entry name" value="Ribosomal_S6e"/>
    <property type="match status" value="1"/>
</dbReference>
<dbReference type="SMART" id="SM01405">
    <property type="entry name" value="Ribosomal_S6e"/>
    <property type="match status" value="1"/>
</dbReference>
<dbReference type="PROSITE" id="PS00578">
    <property type="entry name" value="RIBOSOMAL_S6E"/>
    <property type="match status" value="1"/>
</dbReference>
<evidence type="ECO:0000255" key="1">
    <source>
        <dbReference type="HAMAP-Rule" id="MF_00512"/>
    </source>
</evidence>
<evidence type="ECO:0000256" key="2">
    <source>
        <dbReference type="SAM" id="MobiDB-lite"/>
    </source>
</evidence>
<evidence type="ECO:0000305" key="3"/>
<protein>
    <recommendedName>
        <fullName evidence="1">Small ribosomal subunit protein eS6</fullName>
    </recommendedName>
    <alternativeName>
        <fullName evidence="3">30S ribosomal protein S6e</fullName>
    </alternativeName>
</protein>
<reference key="1">
    <citation type="journal article" date="2005" name="Genome Res.">
        <title>Living with two extremes: conclusions from the genome sequence of Natronomonas pharaonis.</title>
        <authorList>
            <person name="Falb M."/>
            <person name="Pfeiffer F."/>
            <person name="Palm P."/>
            <person name="Rodewald K."/>
            <person name="Hickmann V."/>
            <person name="Tittor J."/>
            <person name="Oesterhelt D."/>
        </authorList>
    </citation>
    <scope>NUCLEOTIDE SEQUENCE [LARGE SCALE GENOMIC DNA]</scope>
    <source>
        <strain>ATCC 35678 / DSM 2160 / CIP 103997 / JCM 8858 / NBRC 14720 / NCIMB 2260 / Gabara</strain>
    </source>
</reference>
<gene>
    <name evidence="1" type="primary">rps6e</name>
    <name type="ordered locus">NP_1368A</name>
</gene>
<name>RS6E_NATPD</name>